<gene>
    <name evidence="1" type="primary">coaX</name>
    <name type="ordered locus">MSMEG_6096</name>
    <name type="ordered locus">MSMEI_5937</name>
</gene>
<protein>
    <recommendedName>
        <fullName evidence="1">Type III pantothenate kinase</fullName>
        <ecNumber evidence="1">2.7.1.33</ecNumber>
    </recommendedName>
    <alternativeName>
        <fullName evidence="1">PanK-III</fullName>
    </alternativeName>
    <alternativeName>
        <fullName evidence="1">Pantothenic acid kinase</fullName>
    </alternativeName>
</protein>
<feature type="chain" id="PRO_1000054391" description="Type III pantothenate kinase">
    <location>
        <begin position="1"/>
        <end position="271"/>
    </location>
</feature>
<feature type="active site" description="Proton acceptor" evidence="1">
    <location>
        <position position="111"/>
    </location>
</feature>
<feature type="binding site" evidence="1">
    <location>
        <begin position="6"/>
        <end position="13"/>
    </location>
    <ligand>
        <name>ATP</name>
        <dbReference type="ChEBI" id="CHEBI:30616"/>
    </ligand>
</feature>
<feature type="binding site" evidence="1">
    <location>
        <begin position="109"/>
        <end position="112"/>
    </location>
    <ligand>
        <name>substrate</name>
    </ligand>
</feature>
<feature type="binding site" evidence="1">
    <location>
        <position position="131"/>
    </location>
    <ligand>
        <name>K(+)</name>
        <dbReference type="ChEBI" id="CHEBI:29103"/>
    </ligand>
</feature>
<feature type="binding site" evidence="1">
    <location>
        <position position="134"/>
    </location>
    <ligand>
        <name>ATP</name>
        <dbReference type="ChEBI" id="CHEBI:30616"/>
    </ligand>
</feature>
<feature type="binding site" evidence="1">
    <location>
        <position position="186"/>
    </location>
    <ligand>
        <name>substrate</name>
    </ligand>
</feature>
<evidence type="ECO:0000255" key="1">
    <source>
        <dbReference type="HAMAP-Rule" id="MF_01274"/>
    </source>
</evidence>
<organism>
    <name type="scientific">Mycolicibacterium smegmatis (strain ATCC 700084 / mc(2)155)</name>
    <name type="common">Mycobacterium smegmatis</name>
    <dbReference type="NCBI Taxonomy" id="246196"/>
    <lineage>
        <taxon>Bacteria</taxon>
        <taxon>Bacillati</taxon>
        <taxon>Actinomycetota</taxon>
        <taxon>Actinomycetes</taxon>
        <taxon>Mycobacteriales</taxon>
        <taxon>Mycobacteriaceae</taxon>
        <taxon>Mycolicibacterium</taxon>
    </lineage>
</organism>
<comment type="function">
    <text evidence="1">Catalyzes the phosphorylation of pantothenate (Pan), the first step in CoA biosynthesis.</text>
</comment>
<comment type="catalytic activity">
    <reaction evidence="1">
        <text>(R)-pantothenate + ATP = (R)-4'-phosphopantothenate + ADP + H(+)</text>
        <dbReference type="Rhea" id="RHEA:16373"/>
        <dbReference type="ChEBI" id="CHEBI:10986"/>
        <dbReference type="ChEBI" id="CHEBI:15378"/>
        <dbReference type="ChEBI" id="CHEBI:29032"/>
        <dbReference type="ChEBI" id="CHEBI:30616"/>
        <dbReference type="ChEBI" id="CHEBI:456216"/>
        <dbReference type="EC" id="2.7.1.33"/>
    </reaction>
</comment>
<comment type="cofactor">
    <cofactor evidence="1">
        <name>NH4(+)</name>
        <dbReference type="ChEBI" id="CHEBI:28938"/>
    </cofactor>
    <cofactor evidence="1">
        <name>K(+)</name>
        <dbReference type="ChEBI" id="CHEBI:29103"/>
    </cofactor>
    <text evidence="1">A monovalent cation. Ammonium or potassium.</text>
</comment>
<comment type="pathway">
    <text evidence="1">Cofactor biosynthesis; coenzyme A biosynthesis; CoA from (R)-pantothenate: step 1/5.</text>
</comment>
<comment type="subunit">
    <text evidence="1">Homodimer.</text>
</comment>
<comment type="subcellular location">
    <subcellularLocation>
        <location evidence="1">Cytoplasm</location>
    </subcellularLocation>
</comment>
<comment type="similarity">
    <text evidence="1">Belongs to the type III pantothenate kinase family.</text>
</comment>
<accession>A0R579</accession>
<accession>I7FM71</accession>
<proteinExistence type="inferred from homology"/>
<reference key="1">
    <citation type="submission" date="2006-10" db="EMBL/GenBank/DDBJ databases">
        <authorList>
            <person name="Fleischmann R.D."/>
            <person name="Dodson R.J."/>
            <person name="Haft D.H."/>
            <person name="Merkel J.S."/>
            <person name="Nelson W.C."/>
            <person name="Fraser C.M."/>
        </authorList>
    </citation>
    <scope>NUCLEOTIDE SEQUENCE [LARGE SCALE GENOMIC DNA]</scope>
    <source>
        <strain>ATCC 700084 / mc(2)155</strain>
    </source>
</reference>
<reference key="2">
    <citation type="journal article" date="2007" name="Genome Biol.">
        <title>Interrupted coding sequences in Mycobacterium smegmatis: authentic mutations or sequencing errors?</title>
        <authorList>
            <person name="Deshayes C."/>
            <person name="Perrodou E."/>
            <person name="Gallien S."/>
            <person name="Euphrasie D."/>
            <person name="Schaeffer C."/>
            <person name="Van-Dorsselaer A."/>
            <person name="Poch O."/>
            <person name="Lecompte O."/>
            <person name="Reyrat J.-M."/>
        </authorList>
    </citation>
    <scope>NUCLEOTIDE SEQUENCE [LARGE SCALE GENOMIC DNA]</scope>
    <source>
        <strain>ATCC 700084 / mc(2)155</strain>
    </source>
</reference>
<reference key="3">
    <citation type="journal article" date="2009" name="Genome Res.">
        <title>Ortho-proteogenomics: multiple proteomes investigation through orthology and a new MS-based protocol.</title>
        <authorList>
            <person name="Gallien S."/>
            <person name="Perrodou E."/>
            <person name="Carapito C."/>
            <person name="Deshayes C."/>
            <person name="Reyrat J.-M."/>
            <person name="Van Dorsselaer A."/>
            <person name="Poch O."/>
            <person name="Schaeffer C."/>
            <person name="Lecompte O."/>
        </authorList>
    </citation>
    <scope>NUCLEOTIDE SEQUENCE [LARGE SCALE GENOMIC DNA]</scope>
    <source>
        <strain>ATCC 700084 / mc(2)155</strain>
    </source>
</reference>
<keyword id="KW-0067">ATP-binding</keyword>
<keyword id="KW-0173">Coenzyme A biosynthesis</keyword>
<keyword id="KW-0963">Cytoplasm</keyword>
<keyword id="KW-0418">Kinase</keyword>
<keyword id="KW-0479">Metal-binding</keyword>
<keyword id="KW-0547">Nucleotide-binding</keyword>
<keyword id="KW-0630">Potassium</keyword>
<keyword id="KW-1185">Reference proteome</keyword>
<keyword id="KW-0808">Transferase</keyword>
<dbReference type="EC" id="2.7.1.33" evidence="1"/>
<dbReference type="EMBL" id="CP000480">
    <property type="protein sequence ID" value="ABK73269.1"/>
    <property type="molecule type" value="Genomic_DNA"/>
</dbReference>
<dbReference type="EMBL" id="CP001663">
    <property type="protein sequence ID" value="AFP42370.1"/>
    <property type="molecule type" value="Genomic_DNA"/>
</dbReference>
<dbReference type="RefSeq" id="WP_003897496.1">
    <property type="nucleotide sequence ID" value="NZ_SIJM01000046.1"/>
</dbReference>
<dbReference type="RefSeq" id="YP_890317.1">
    <property type="nucleotide sequence ID" value="NC_008596.1"/>
</dbReference>
<dbReference type="SMR" id="A0R579"/>
<dbReference type="STRING" id="246196.MSMEG_6096"/>
<dbReference type="PaxDb" id="246196-MSMEI_5937"/>
<dbReference type="KEGG" id="msb:LJ00_30145"/>
<dbReference type="KEGG" id="msg:MSMEI_5937"/>
<dbReference type="KEGG" id="msm:MSMEG_6096"/>
<dbReference type="PATRIC" id="fig|246196.19.peg.5935"/>
<dbReference type="eggNOG" id="COG1521">
    <property type="taxonomic scope" value="Bacteria"/>
</dbReference>
<dbReference type="OrthoDB" id="9804707at2"/>
<dbReference type="UniPathway" id="UPA00241">
    <property type="reaction ID" value="UER00352"/>
</dbReference>
<dbReference type="Proteomes" id="UP000000757">
    <property type="component" value="Chromosome"/>
</dbReference>
<dbReference type="Proteomes" id="UP000006158">
    <property type="component" value="Chromosome"/>
</dbReference>
<dbReference type="GO" id="GO:0005737">
    <property type="term" value="C:cytoplasm"/>
    <property type="evidence" value="ECO:0007669"/>
    <property type="project" value="UniProtKB-SubCell"/>
</dbReference>
<dbReference type="GO" id="GO:0005524">
    <property type="term" value="F:ATP binding"/>
    <property type="evidence" value="ECO:0007669"/>
    <property type="project" value="UniProtKB-UniRule"/>
</dbReference>
<dbReference type="GO" id="GO:0046872">
    <property type="term" value="F:metal ion binding"/>
    <property type="evidence" value="ECO:0007669"/>
    <property type="project" value="UniProtKB-KW"/>
</dbReference>
<dbReference type="GO" id="GO:0004594">
    <property type="term" value="F:pantothenate kinase activity"/>
    <property type="evidence" value="ECO:0007669"/>
    <property type="project" value="UniProtKB-UniRule"/>
</dbReference>
<dbReference type="GO" id="GO:0015937">
    <property type="term" value="P:coenzyme A biosynthetic process"/>
    <property type="evidence" value="ECO:0007669"/>
    <property type="project" value="UniProtKB-UniRule"/>
</dbReference>
<dbReference type="CDD" id="cd24015">
    <property type="entry name" value="ASKHA_NBD_PanK-III"/>
    <property type="match status" value="1"/>
</dbReference>
<dbReference type="Gene3D" id="3.30.420.40">
    <property type="match status" value="2"/>
</dbReference>
<dbReference type="HAMAP" id="MF_01274">
    <property type="entry name" value="Pantothen_kinase_3"/>
    <property type="match status" value="1"/>
</dbReference>
<dbReference type="InterPro" id="IPR043129">
    <property type="entry name" value="ATPase_NBD"/>
</dbReference>
<dbReference type="InterPro" id="IPR004619">
    <property type="entry name" value="Type_III_PanK"/>
</dbReference>
<dbReference type="NCBIfam" id="TIGR00671">
    <property type="entry name" value="baf"/>
    <property type="match status" value="1"/>
</dbReference>
<dbReference type="NCBIfam" id="NF009845">
    <property type="entry name" value="PRK13318.1-3"/>
    <property type="match status" value="1"/>
</dbReference>
<dbReference type="PANTHER" id="PTHR34265">
    <property type="entry name" value="TYPE III PANTOTHENATE KINASE"/>
    <property type="match status" value="1"/>
</dbReference>
<dbReference type="PANTHER" id="PTHR34265:SF1">
    <property type="entry name" value="TYPE III PANTOTHENATE KINASE"/>
    <property type="match status" value="1"/>
</dbReference>
<dbReference type="Pfam" id="PF03309">
    <property type="entry name" value="Pan_kinase"/>
    <property type="match status" value="1"/>
</dbReference>
<dbReference type="SUPFAM" id="SSF53067">
    <property type="entry name" value="Actin-like ATPase domain"/>
    <property type="match status" value="2"/>
</dbReference>
<sequence length="271" mass="28904">MLLAIDVRNTHTVVGLISGSGDHAKVVQQWRIRTEPEVTADELALTIDGLIGDDAERLTGASGLSTVPSVLHEVRVMLEQYWPNVPHVLIEPGVRTGIPLLVDNPKEVGADRIVNCLAAYHKYGTAAIVVDFGSSICVDVVSAKGEFLGGAIAPGVQVSSDAAAARSAALRRVELTRPRSVIGKNTVECMQAGAVFGFAGLVDGLVNRIRDDVDGFSGADVAVVATGHTAPLVLPDLRTVEHYDRHLTLDGLRLVFERNRANQRGKLKPAR</sequence>
<name>COAX_MYCS2</name>